<protein>
    <recommendedName>
        <fullName>ATP synthase subunit alpha, mitochondrial</fullName>
    </recommendedName>
</protein>
<sequence length="545" mass="58608">MLARTAAIRSLSRTLINSTKAARPAAAALASTRRLASTKAQPTEVSSILEERIKGVSDEANLNETGRVLAVGDGIARVFGLNNIQAEELVEFSSGVKGMALNLEPGQVGIVLFGSDRLVKEGELVKRTGNIVDVPVGPGLLGRVVDALGNPIDGKGPIDAAGRSRAQVKAPGILPRRSVHEPVQTGLKAVDALVPIGRGQRELIIGDRQTGKTAVALDTILNQKRWNNGSDESKKLYCVYVAVGQKRSTVAQLVQTLEQHDAMKYSIIVAATASEAAPLQYLAPFTAASIGEWFRDNGKHALIVYDDLSKQAVAYRQLSLLLRRPPGREAYPGDVFYLHSRLLERAAKLSEKEGSGSLTALPVIETQGGDVSAYIPTNVISITDGQIFLEAELFYKGIRPAINVGLSVSRVGSAAQVKALKQVAGSLKLFLAQYREVAAFAQFGSDLDASTKQTLVRGERLTQLLKQNQYSPLATEEQVPLIYAGVNGHLDGIELSRIGEFESSFLSYLKSNHNELLTEIREKGELSKELLASLKSATESFVATF</sequence>
<comment type="function">
    <text evidence="1">Mitochondrial membrane ATP synthase (F(1)F(0) ATP synthase or Complex V) produces ATP from ADP in the presence of a proton gradient across the membrane which is generated by electron transport complexes of the respiratory chain. F-type ATPases consist of two structural domains, F(1) - containing the extramembraneous catalytic core, and F(0) - containing the membrane proton channel, linked together by a central stalk and a peripheral stalk. During catalysis, ATP synthesis in the catalytic domain of F(1) is coupled via a rotary mechanism of the central stalk subunits to proton translocation. Subunits alpha and beta form the catalytic core in F(1). Rotation of the central stalk against the surrounding alpha(3)beta(3) subunits leads to hydrolysis of ATP in three separate catalytic sites on the beta subunits. Subunit alpha does not bear the catalytic high-affinity ATP-binding sites (By similarity).</text>
</comment>
<comment type="subunit">
    <text>F-type ATPases have 2 components, CF(1) - the catalytic core - and CF(0) - the membrane proton channel. CF(1) has five subunits: alpha(3), beta(3), gamma(1), delta(1), epsilon(1). CF(0) has three main subunits: a, b and c.</text>
</comment>
<comment type="subcellular location">
    <subcellularLocation>
        <location evidence="3">Mitochondrion inner membrane</location>
    </subcellularLocation>
    <text>Peripheral membrane protein.</text>
</comment>
<comment type="miscellaneous">
    <text evidence="4">Present with 41500 molecules/cell in log phase SD medium.</text>
</comment>
<comment type="similarity">
    <text evidence="5">Belongs to the ATPase alpha/beta chains family.</text>
</comment>
<reference key="1">
    <citation type="journal article" date="1986" name="J. Biol. Chem.">
        <title>Nuclear genes encoding the yeast mitochondrial ATPase complex. Analysis of ATP1 coding the F1-ATPase alpha-subunit and its assembly.</title>
        <authorList>
            <person name="Takeda M."/>
            <person name="Chen W.-J."/>
            <person name="Saltzgaber J."/>
            <person name="Douglas M.G."/>
        </authorList>
    </citation>
    <scope>NUCLEOTIDE SEQUENCE [GENOMIC DNA]</scope>
</reference>
<reference key="2">
    <citation type="journal article" date="2000" name="J. Biol. Chem.">
        <title>ASC1/RAS2 suppresses the growth-defect on glycerol caused by the atp1-2 mutation in the yeast Saccharomyces cerevisiae.</title>
        <authorList>
            <person name="Mabuchi T."/>
            <person name="Ichimura Y."/>
            <person name="Takeda M."/>
            <person name="Douglas M.G."/>
        </authorList>
    </citation>
    <scope>NUCLEOTIDE SEQUENCE [GENOMIC DNA]</scope>
    <scope>MUTAGENESIS OF GLY-291 AND THR-383</scope>
    <source>
        <strain>ATCC 64665 / S288c / DC5</strain>
    </source>
</reference>
<reference key="3">
    <citation type="journal article" date="1995" name="Yeast">
        <title>Sequence analysis of a 78.6 kb segment of the left end of Saccharomyces cerevisiae chromosome II.</title>
        <authorList>
            <person name="Obermaier B."/>
            <person name="Gassenhuber J."/>
            <person name="Piravandi E."/>
            <person name="Domdey H."/>
        </authorList>
    </citation>
    <scope>NUCLEOTIDE SEQUENCE [GENOMIC DNA]</scope>
    <source>
        <strain>ATCC 204508 / S288c</strain>
    </source>
</reference>
<reference key="4">
    <citation type="journal article" date="1994" name="EMBO J.">
        <title>Complete DNA sequence of yeast chromosome II.</title>
        <authorList>
            <person name="Feldmann H."/>
            <person name="Aigle M."/>
            <person name="Aljinovic G."/>
            <person name="Andre B."/>
            <person name="Baclet M.C."/>
            <person name="Barthe C."/>
            <person name="Baur A."/>
            <person name="Becam A.-M."/>
            <person name="Biteau N."/>
            <person name="Boles E."/>
            <person name="Brandt T."/>
            <person name="Brendel M."/>
            <person name="Brueckner M."/>
            <person name="Bussereau F."/>
            <person name="Christiansen C."/>
            <person name="Contreras R."/>
            <person name="Crouzet M."/>
            <person name="Cziepluch C."/>
            <person name="Demolis N."/>
            <person name="Delaveau T."/>
            <person name="Doignon F."/>
            <person name="Domdey H."/>
            <person name="Duesterhus S."/>
            <person name="Dubois E."/>
            <person name="Dujon B."/>
            <person name="El Bakkoury M."/>
            <person name="Entian K.-D."/>
            <person name="Feuermann M."/>
            <person name="Fiers W."/>
            <person name="Fobo G.M."/>
            <person name="Fritz C."/>
            <person name="Gassenhuber J."/>
            <person name="Glansdorff N."/>
            <person name="Goffeau A."/>
            <person name="Grivell L.A."/>
            <person name="de Haan M."/>
            <person name="Hein C."/>
            <person name="Herbert C.J."/>
            <person name="Hollenberg C.P."/>
            <person name="Holmstroem K."/>
            <person name="Jacq C."/>
            <person name="Jacquet M."/>
            <person name="Jauniaux J.-C."/>
            <person name="Jonniaux J.-L."/>
            <person name="Kallesoee T."/>
            <person name="Kiesau P."/>
            <person name="Kirchrath L."/>
            <person name="Koetter P."/>
            <person name="Korol S."/>
            <person name="Liebl S."/>
            <person name="Logghe M."/>
            <person name="Lohan A.J.E."/>
            <person name="Louis E.J."/>
            <person name="Li Z.Y."/>
            <person name="Maat M.J."/>
            <person name="Mallet L."/>
            <person name="Mannhaupt G."/>
            <person name="Messenguy F."/>
            <person name="Miosga T."/>
            <person name="Molemans F."/>
            <person name="Mueller S."/>
            <person name="Nasr F."/>
            <person name="Obermaier B."/>
            <person name="Perea J."/>
            <person name="Pierard A."/>
            <person name="Piravandi E."/>
            <person name="Pohl F.M."/>
            <person name="Pohl T.M."/>
            <person name="Potier S."/>
            <person name="Proft M."/>
            <person name="Purnelle B."/>
            <person name="Ramezani Rad M."/>
            <person name="Rieger M."/>
            <person name="Rose M."/>
            <person name="Schaaff-Gerstenschlaeger I."/>
            <person name="Scherens B."/>
            <person name="Schwarzlose C."/>
            <person name="Skala J."/>
            <person name="Slonimski P.P."/>
            <person name="Smits P.H.M."/>
            <person name="Souciet J.-L."/>
            <person name="Steensma H.Y."/>
            <person name="Stucka R."/>
            <person name="Urrestarazu L.A."/>
            <person name="van der Aart Q.J.M."/>
            <person name="Van Dyck L."/>
            <person name="Vassarotti A."/>
            <person name="Vetter I."/>
            <person name="Vierendeels F."/>
            <person name="Vissers S."/>
            <person name="Wagner G."/>
            <person name="de Wergifosse P."/>
            <person name="Wolfe K.H."/>
            <person name="Zagulski M."/>
            <person name="Zimmermann F.K."/>
            <person name="Mewes H.-W."/>
            <person name="Kleine K."/>
        </authorList>
    </citation>
    <scope>NUCLEOTIDE SEQUENCE [LARGE SCALE GENOMIC DNA]</scope>
    <source>
        <strain>ATCC 204508 / S288c</strain>
    </source>
</reference>
<reference key="5">
    <citation type="journal article" date="2014" name="G3 (Bethesda)">
        <title>The reference genome sequence of Saccharomyces cerevisiae: Then and now.</title>
        <authorList>
            <person name="Engel S.R."/>
            <person name="Dietrich F.S."/>
            <person name="Fisk D.G."/>
            <person name="Binkley G."/>
            <person name="Balakrishnan R."/>
            <person name="Costanzo M.C."/>
            <person name="Dwight S.S."/>
            <person name="Hitz B.C."/>
            <person name="Karra K."/>
            <person name="Nash R.S."/>
            <person name="Weng S."/>
            <person name="Wong E.D."/>
            <person name="Lloyd P."/>
            <person name="Skrzypek M.S."/>
            <person name="Miyasato S.R."/>
            <person name="Simison M."/>
            <person name="Cherry J.M."/>
        </authorList>
    </citation>
    <scope>GENOME REANNOTATION</scope>
    <scope>SEQUENCE REVISION TO 340</scope>
    <source>
        <strain>ATCC 204508 / S288c</strain>
    </source>
</reference>
<reference key="6">
    <citation type="journal article" date="2007" name="Genome Res.">
        <title>Approaching a complete repository of sequence-verified protein-encoding clones for Saccharomyces cerevisiae.</title>
        <authorList>
            <person name="Hu Y."/>
            <person name="Rolfs A."/>
            <person name="Bhullar B."/>
            <person name="Murthy T.V.S."/>
            <person name="Zhu C."/>
            <person name="Berger M.F."/>
            <person name="Camargo A.A."/>
            <person name="Kelley F."/>
            <person name="McCarron S."/>
            <person name="Jepson D."/>
            <person name="Richardson A."/>
            <person name="Raphael J."/>
            <person name="Moreira D."/>
            <person name="Taycher E."/>
            <person name="Zuo D."/>
            <person name="Mohr S."/>
            <person name="Kane M.F."/>
            <person name="Williamson J."/>
            <person name="Simpson A.J.G."/>
            <person name="Bulyk M.L."/>
            <person name="Harlow E."/>
            <person name="Marsischky G."/>
            <person name="Kolodner R.D."/>
            <person name="LaBaer J."/>
        </authorList>
    </citation>
    <scope>NUCLEOTIDE SEQUENCE [GENOMIC DNA]</scope>
    <source>
        <strain>ATCC 204508 / S288c</strain>
    </source>
</reference>
<reference key="7">
    <citation type="journal article" date="2001" name="Biochemistry">
        <title>Yeast mitochondrial dehydrogenases are associated in a supramolecular complex.</title>
        <authorList>
            <person name="Grandier-Vazeille X."/>
            <person name="Bathany K."/>
            <person name="Chaignepain S."/>
            <person name="Camougrand N."/>
            <person name="Manon S."/>
            <person name="Schmitter J.-M."/>
        </authorList>
    </citation>
    <scope>SUBCELLULAR LOCATION</scope>
</reference>
<reference key="8">
    <citation type="journal article" date="2003" name="Nature">
        <title>Global analysis of protein expression in yeast.</title>
        <authorList>
            <person name="Ghaemmaghami S."/>
            <person name="Huh W.-K."/>
            <person name="Bower K."/>
            <person name="Howson R.W."/>
            <person name="Belle A."/>
            <person name="Dephoure N."/>
            <person name="O'Shea E.K."/>
            <person name="Weissman J.S."/>
        </authorList>
    </citation>
    <scope>LEVEL OF PROTEIN EXPRESSION [LARGE SCALE ANALYSIS]</scope>
</reference>
<reference key="9">
    <citation type="journal article" date="2007" name="Mol. Cell. Proteomics">
        <title>Profiling phosphoproteins of yeast mitochondria reveals a role of phosphorylation in assembly of the ATP synthase.</title>
        <authorList>
            <person name="Reinders J."/>
            <person name="Wagner K."/>
            <person name="Zahedi R.P."/>
            <person name="Stojanovski D."/>
            <person name="Eyrich B."/>
            <person name="van der Laan M."/>
            <person name="Rehling P."/>
            <person name="Sickmann A."/>
            <person name="Pfanner N."/>
            <person name="Meisinger C."/>
        </authorList>
    </citation>
    <scope>PHOSPHORYLATION [LARGE SCALE ANALYSIS] AT SER-57 AND SER-178</scope>
    <scope>IDENTIFICATION BY MASS SPECTROMETRY [LARGE SCALE ANALYSIS]</scope>
    <source>
        <strain>ATCC 76625 / YPH499</strain>
    </source>
</reference>
<reference key="10">
    <citation type="journal article" date="1999" name="Science">
        <title>Molecular architecture of the rotary motor in ATP synthase.</title>
        <authorList>
            <person name="Stock D."/>
            <person name="Leslie A.G."/>
            <person name="Walker J.E."/>
        </authorList>
    </citation>
    <scope>3D-STRUCTURE MODELING</scope>
</reference>
<proteinExistence type="evidence at protein level"/>
<gene>
    <name type="primary">ATP1</name>
    <name type="ordered locus">YBL099W</name>
    <name type="ORF">YBL0827</name>
</gene>
<keyword id="KW-0002">3D-structure</keyword>
<keyword id="KW-0066">ATP synthesis</keyword>
<keyword id="KW-0067">ATP-binding</keyword>
<keyword id="KW-0139">CF(1)</keyword>
<keyword id="KW-0375">Hydrogen ion transport</keyword>
<keyword id="KW-0406">Ion transport</keyword>
<keyword id="KW-0472">Membrane</keyword>
<keyword id="KW-0496">Mitochondrion</keyword>
<keyword id="KW-0999">Mitochondrion inner membrane</keyword>
<keyword id="KW-0547">Nucleotide-binding</keyword>
<keyword id="KW-0597">Phosphoprotein</keyword>
<keyword id="KW-1185">Reference proteome</keyword>
<keyword id="KW-0809">Transit peptide</keyword>
<keyword id="KW-0813">Transport</keyword>
<feature type="transit peptide" description="Mitochondrion">
    <location>
        <begin position="1"/>
        <end position="35"/>
    </location>
</feature>
<feature type="chain" id="PRO_0000002433" description="ATP synthase subunit alpha, mitochondrial">
    <location>
        <begin position="36"/>
        <end position="545"/>
    </location>
</feature>
<feature type="binding site" evidence="1">
    <location>
        <begin position="206"/>
        <end position="213"/>
    </location>
    <ligand>
        <name>ATP</name>
        <dbReference type="ChEBI" id="CHEBI:30616"/>
    </ligand>
</feature>
<feature type="site" description="Required for activity" evidence="1">
    <location>
        <position position="407"/>
    </location>
</feature>
<feature type="modified residue" description="Phosphoserine" evidence="6">
    <location>
        <position position="57"/>
    </location>
</feature>
<feature type="modified residue" description="Phosphoserine" evidence="6">
    <location>
        <position position="178"/>
    </location>
</feature>
<feature type="mutagenesis site" description="In ATP1-2; growth-defect." evidence="2">
    <original>G</original>
    <variation>D</variation>
    <location>
        <position position="291"/>
    </location>
</feature>
<feature type="mutagenesis site" description="In ATP1-1; growth-defect." evidence="2">
    <original>T</original>
    <variation>I</variation>
    <location>
        <position position="383"/>
    </location>
</feature>
<feature type="sequence conflict" description="In Ref. 1; AAA66888." evidence="5" ref="1">
    <original>QAV</original>
    <variation>ASL</variation>
    <location>
        <begin position="311"/>
        <end position="313"/>
    </location>
</feature>
<feature type="sequence conflict" description="In Ref. 1; AAA66888." evidence="5" ref="1">
    <original>L</original>
    <variation>M</variation>
    <location>
        <position position="321"/>
    </location>
</feature>
<feature type="sequence conflict" description="In Ref. 3; CAA56001 and 4; CAA84924." evidence="5" ref="3 4">
    <original>S</original>
    <variation>P</variation>
    <location>
        <position position="340"/>
    </location>
</feature>
<feature type="sequence conflict" description="In Ref. 1; AAA66888." evidence="5" ref="1">
    <original>G</original>
    <variation>A</variation>
    <location>
        <position position="385"/>
    </location>
</feature>
<feature type="sequence conflict" description="In Ref. 1; AAA66888." evidence="5" ref="1">
    <original>E</original>
    <variation>Q</variation>
    <location>
        <position position="459"/>
    </location>
</feature>
<feature type="sequence conflict" description="In Ref. 1; AAA66888." evidence="5" ref="1">
    <original>VPLIY</original>
    <variation>SMII</variation>
    <location>
        <begin position="479"/>
        <end position="483"/>
    </location>
</feature>
<feature type="sequence conflict" description="In Ref. 1; AAA66888." evidence="5" ref="1">
    <original>LDGI</original>
    <variation>SGWY</variation>
    <location>
        <begin position="490"/>
        <end position="493"/>
    </location>
</feature>
<feature type="turn" evidence="9">
    <location>
        <begin position="62"/>
        <end position="64"/>
    </location>
</feature>
<feature type="strand" evidence="9">
    <location>
        <begin position="65"/>
        <end position="72"/>
    </location>
</feature>
<feature type="strand" evidence="9">
    <location>
        <begin position="75"/>
        <end position="80"/>
    </location>
</feature>
<feature type="strand" evidence="9">
    <location>
        <begin position="88"/>
        <end position="92"/>
    </location>
</feature>
<feature type="strand" evidence="9">
    <location>
        <begin position="97"/>
        <end position="103"/>
    </location>
</feature>
<feature type="strand" evidence="9">
    <location>
        <begin position="108"/>
        <end position="114"/>
    </location>
</feature>
<feature type="helix" evidence="9">
    <location>
        <begin position="116"/>
        <end position="118"/>
    </location>
</feature>
<feature type="strand" evidence="9">
    <location>
        <begin position="124"/>
        <end position="137"/>
    </location>
</feature>
<feature type="helix" evidence="9">
    <location>
        <begin position="138"/>
        <end position="140"/>
    </location>
</feature>
<feature type="strand" evidence="9">
    <location>
        <begin position="144"/>
        <end position="146"/>
    </location>
</feature>
<feature type="strand" evidence="9">
    <location>
        <begin position="153"/>
        <end position="155"/>
    </location>
</feature>
<feature type="strand" evidence="9">
    <location>
        <begin position="161"/>
        <end position="167"/>
    </location>
</feature>
<feature type="strand" evidence="8">
    <location>
        <begin position="173"/>
        <end position="176"/>
    </location>
</feature>
<feature type="strand" evidence="8">
    <location>
        <begin position="181"/>
        <end position="183"/>
    </location>
</feature>
<feature type="helix" evidence="9">
    <location>
        <begin position="188"/>
        <end position="193"/>
    </location>
</feature>
<feature type="strand" evidence="9">
    <location>
        <begin position="203"/>
        <end position="207"/>
    </location>
</feature>
<feature type="strand" evidence="7">
    <location>
        <begin position="208"/>
        <end position="211"/>
    </location>
</feature>
<feature type="helix" evidence="9">
    <location>
        <begin position="212"/>
        <end position="221"/>
    </location>
</feature>
<feature type="helix" evidence="9">
    <location>
        <begin position="224"/>
        <end position="227"/>
    </location>
</feature>
<feature type="strand" evidence="9">
    <location>
        <begin position="228"/>
        <end position="230"/>
    </location>
</feature>
<feature type="turn" evidence="9">
    <location>
        <begin position="232"/>
        <end position="234"/>
    </location>
</feature>
<feature type="strand" evidence="9">
    <location>
        <begin position="237"/>
        <end position="244"/>
    </location>
</feature>
<feature type="helix" evidence="9">
    <location>
        <begin position="247"/>
        <end position="258"/>
    </location>
</feature>
<feature type="turn" evidence="9">
    <location>
        <begin position="259"/>
        <end position="261"/>
    </location>
</feature>
<feature type="helix" evidence="9">
    <location>
        <begin position="263"/>
        <end position="265"/>
    </location>
</feature>
<feature type="strand" evidence="9">
    <location>
        <begin position="266"/>
        <end position="271"/>
    </location>
</feature>
<feature type="helix" evidence="9">
    <location>
        <begin position="277"/>
        <end position="296"/>
    </location>
</feature>
<feature type="strand" evidence="9">
    <location>
        <begin position="300"/>
        <end position="306"/>
    </location>
</feature>
<feature type="helix" evidence="9">
    <location>
        <begin position="308"/>
        <end position="321"/>
    </location>
</feature>
<feature type="helix" evidence="9">
    <location>
        <begin position="328"/>
        <end position="330"/>
    </location>
</feature>
<feature type="helix" evidence="9">
    <location>
        <begin position="335"/>
        <end position="343"/>
    </location>
</feature>
<feature type="strand" evidence="9">
    <location>
        <begin position="347"/>
        <end position="349"/>
    </location>
</feature>
<feature type="turn" evidence="9">
    <location>
        <begin position="351"/>
        <end position="354"/>
    </location>
</feature>
<feature type="strand" evidence="9">
    <location>
        <begin position="357"/>
        <end position="365"/>
    </location>
</feature>
<feature type="strand" evidence="9">
    <location>
        <begin position="367"/>
        <end position="369"/>
    </location>
</feature>
<feature type="helix" evidence="9">
    <location>
        <begin position="374"/>
        <end position="382"/>
    </location>
</feature>
<feature type="strand" evidence="9">
    <location>
        <begin position="383"/>
        <end position="389"/>
    </location>
</feature>
<feature type="helix" evidence="9">
    <location>
        <begin position="391"/>
        <end position="396"/>
    </location>
</feature>
<feature type="turn" evidence="9">
    <location>
        <begin position="404"/>
        <end position="406"/>
    </location>
</feature>
<feature type="strand" evidence="9">
    <location>
        <begin position="408"/>
        <end position="411"/>
    </location>
</feature>
<feature type="helix" evidence="9">
    <location>
        <begin position="412"/>
        <end position="415"/>
    </location>
</feature>
<feature type="helix" evidence="9">
    <location>
        <begin position="418"/>
        <end position="437"/>
    </location>
</feature>
<feature type="helix" evidence="9">
    <location>
        <begin position="438"/>
        <end position="446"/>
    </location>
</feature>
<feature type="helix" evidence="9">
    <location>
        <begin position="449"/>
        <end position="465"/>
    </location>
</feature>
<feature type="helix" evidence="9">
    <location>
        <begin position="475"/>
        <end position="487"/>
    </location>
</feature>
<feature type="turn" evidence="9">
    <location>
        <begin position="488"/>
        <end position="492"/>
    </location>
</feature>
<feature type="helix" evidence="9">
    <location>
        <begin position="495"/>
        <end position="497"/>
    </location>
</feature>
<feature type="helix" evidence="9">
    <location>
        <begin position="498"/>
        <end position="512"/>
    </location>
</feature>
<feature type="helix" evidence="9">
    <location>
        <begin position="514"/>
        <end position="523"/>
    </location>
</feature>
<feature type="helix" evidence="9">
    <location>
        <begin position="528"/>
        <end position="542"/>
    </location>
</feature>
<name>ATPA_YEAST</name>
<evidence type="ECO:0000250" key="1"/>
<evidence type="ECO:0000269" key="2">
    <source>
    </source>
</evidence>
<evidence type="ECO:0000269" key="3">
    <source>
    </source>
</evidence>
<evidence type="ECO:0000269" key="4">
    <source>
    </source>
</evidence>
<evidence type="ECO:0000305" key="5"/>
<evidence type="ECO:0007744" key="6">
    <source>
    </source>
</evidence>
<evidence type="ECO:0007829" key="7">
    <source>
        <dbReference type="PDB" id="2WPD"/>
    </source>
</evidence>
<evidence type="ECO:0007829" key="8">
    <source>
        <dbReference type="PDB" id="3OEE"/>
    </source>
</evidence>
<evidence type="ECO:0007829" key="9">
    <source>
        <dbReference type="PDB" id="3ZIA"/>
    </source>
</evidence>
<dbReference type="EMBL" id="J02603">
    <property type="protein sequence ID" value="AAA66888.1"/>
    <property type="molecule type" value="Genomic_DNA"/>
</dbReference>
<dbReference type="EMBL" id="D88458">
    <property type="protein sequence ID" value="BAA13613.1"/>
    <property type="molecule type" value="Genomic_DNA"/>
</dbReference>
<dbReference type="EMBL" id="D37948">
    <property type="protein sequence ID" value="BAA22508.1"/>
    <property type="molecule type" value="Genomic_DNA"/>
</dbReference>
<dbReference type="EMBL" id="X79489">
    <property type="protein sequence ID" value="CAA56001.1"/>
    <property type="molecule type" value="Genomic_DNA"/>
</dbReference>
<dbReference type="EMBL" id="Z35861">
    <property type="protein sequence ID" value="CAA84924.1"/>
    <property type="molecule type" value="Genomic_DNA"/>
</dbReference>
<dbReference type="EMBL" id="AY692969">
    <property type="protein sequence ID" value="AAT92988.1"/>
    <property type="molecule type" value="Genomic_DNA"/>
</dbReference>
<dbReference type="EMBL" id="BK006936">
    <property type="protein sequence ID" value="DAA07026.2"/>
    <property type="molecule type" value="Genomic_DNA"/>
</dbReference>
<dbReference type="PIR" id="S45401">
    <property type="entry name" value="PWBYA"/>
</dbReference>
<dbReference type="RefSeq" id="NP_009453.2">
    <property type="nucleotide sequence ID" value="NM_001178339.2"/>
</dbReference>
<dbReference type="PDB" id="2HLD">
    <property type="method" value="X-ray"/>
    <property type="resolution" value="2.80 A"/>
    <property type="chains" value="A/B/C/J/K/L/S/T/U=36-545"/>
</dbReference>
<dbReference type="PDB" id="2WPD">
    <property type="method" value="X-ray"/>
    <property type="resolution" value="3.43 A"/>
    <property type="chains" value="A/B/C=36-545"/>
</dbReference>
<dbReference type="PDB" id="2XOK">
    <property type="method" value="X-ray"/>
    <property type="resolution" value="3.01 A"/>
    <property type="chains" value="A/B/C=1-545"/>
</dbReference>
<dbReference type="PDB" id="3FKS">
    <property type="method" value="X-ray"/>
    <property type="resolution" value="3.59 A"/>
    <property type="chains" value="A/B/C/J/K/L/S/T/U=36-545"/>
</dbReference>
<dbReference type="PDB" id="3OE7">
    <property type="method" value="X-ray"/>
    <property type="resolution" value="3.19 A"/>
    <property type="chains" value="A/B/C/J/K/L/S/T/U=36-545"/>
</dbReference>
<dbReference type="PDB" id="3OEE">
    <property type="method" value="X-ray"/>
    <property type="resolution" value="2.74 A"/>
    <property type="chains" value="A/B/C/J/K/L/S/T/U=36-545"/>
</dbReference>
<dbReference type="PDB" id="3OEH">
    <property type="method" value="X-ray"/>
    <property type="resolution" value="3.00 A"/>
    <property type="chains" value="A/B/C/J/K/L/S/T/U=36-545"/>
</dbReference>
<dbReference type="PDB" id="3OFN">
    <property type="method" value="X-ray"/>
    <property type="resolution" value="3.20 A"/>
    <property type="chains" value="A/B/C/J/K/L/S/T/U=36-545"/>
</dbReference>
<dbReference type="PDB" id="3ZIA">
    <property type="method" value="X-ray"/>
    <property type="resolution" value="2.50 A"/>
    <property type="chains" value="A/B/C/K/L/M=36-545"/>
</dbReference>
<dbReference type="PDB" id="3ZRY">
    <property type="method" value="X-ray"/>
    <property type="resolution" value="6.50 A"/>
    <property type="chains" value="A/B/C=36-545"/>
</dbReference>
<dbReference type="PDB" id="4B2Q">
    <property type="method" value="EM"/>
    <property type="resolution" value="37.00 A"/>
    <property type="chains" value="A/C/a/c=61-545, B/b=60-545"/>
</dbReference>
<dbReference type="PDB" id="6B8H">
    <property type="method" value="EM"/>
    <property type="resolution" value="3.60 A"/>
    <property type="chains" value="B/C/K/W/X/n=36-545"/>
</dbReference>
<dbReference type="PDB" id="6CP3">
    <property type="method" value="EM"/>
    <property type="resolution" value="3.80 A"/>
    <property type="chains" value="A/B/C=36-545"/>
</dbReference>
<dbReference type="PDB" id="6CP6">
    <property type="method" value="EM"/>
    <property type="resolution" value="3.60 A"/>
    <property type="chains" value="A/B/C=36-545"/>
</dbReference>
<dbReference type="PDB" id="7TJT">
    <property type="method" value="EM"/>
    <property type="resolution" value="3.20 A"/>
    <property type="chains" value="A/B/C=36-545"/>
</dbReference>
<dbReference type="PDB" id="7TJU">
    <property type="method" value="EM"/>
    <property type="resolution" value="3.30 A"/>
    <property type="chains" value="A/B/C=36-545"/>
</dbReference>
<dbReference type="PDB" id="7TJV">
    <property type="method" value="EM"/>
    <property type="resolution" value="3.60 A"/>
    <property type="chains" value="A/B/C=36-545"/>
</dbReference>
<dbReference type="PDB" id="7TJW">
    <property type="method" value="EM"/>
    <property type="resolution" value="4.00 A"/>
    <property type="chains" value="A/B/C=36-545"/>
</dbReference>
<dbReference type="PDB" id="7TJX">
    <property type="method" value="EM"/>
    <property type="resolution" value="4.00 A"/>
    <property type="chains" value="A/B/C=36-545"/>
</dbReference>
<dbReference type="PDB" id="7TJY">
    <property type="method" value="EM"/>
    <property type="resolution" value="3.80 A"/>
    <property type="chains" value="A/B/C=36-545"/>
</dbReference>
<dbReference type="PDB" id="7TJZ">
    <property type="method" value="EM"/>
    <property type="resolution" value="4.40 A"/>
    <property type="chains" value="A/B/C=36-545"/>
</dbReference>
<dbReference type="PDB" id="7TK0">
    <property type="method" value="EM"/>
    <property type="resolution" value="4.40 A"/>
    <property type="chains" value="A/B/C=36-545"/>
</dbReference>
<dbReference type="PDB" id="7TK1">
    <property type="method" value="EM"/>
    <property type="resolution" value="7.10 A"/>
    <property type="chains" value="A/B/C=36-545"/>
</dbReference>
<dbReference type="PDB" id="7TK2">
    <property type="method" value="EM"/>
    <property type="resolution" value="6.50 A"/>
    <property type="chains" value="A/B/C=36-545"/>
</dbReference>
<dbReference type="PDB" id="7TK3">
    <property type="method" value="EM"/>
    <property type="resolution" value="6.30 A"/>
    <property type="chains" value="A/B/C=36-545"/>
</dbReference>
<dbReference type="PDB" id="7TK4">
    <property type="method" value="EM"/>
    <property type="resolution" value="7.00 A"/>
    <property type="chains" value="A/B/C=36-545"/>
</dbReference>
<dbReference type="PDB" id="7TK5">
    <property type="method" value="EM"/>
    <property type="resolution" value="7.80 A"/>
    <property type="chains" value="A/B/C=36-545"/>
</dbReference>
<dbReference type="PDB" id="7TK6">
    <property type="method" value="EM"/>
    <property type="resolution" value="6.50 A"/>
    <property type="chains" value="A/B/C=36-545"/>
</dbReference>
<dbReference type="PDB" id="7TK7">
    <property type="method" value="EM"/>
    <property type="resolution" value="6.70 A"/>
    <property type="chains" value="A/B/C=36-545"/>
</dbReference>
<dbReference type="PDB" id="7TK8">
    <property type="method" value="EM"/>
    <property type="resolution" value="4.70 A"/>
    <property type="chains" value="A/B/C=36-545"/>
</dbReference>
<dbReference type="PDB" id="7TK9">
    <property type="method" value="EM"/>
    <property type="resolution" value="6.00 A"/>
    <property type="chains" value="A/B/C=36-545"/>
</dbReference>
<dbReference type="PDB" id="7TKA">
    <property type="method" value="EM"/>
    <property type="resolution" value="7.10 A"/>
    <property type="chains" value="A/B/C=36-545"/>
</dbReference>
<dbReference type="PDB" id="7TKB">
    <property type="method" value="EM"/>
    <property type="resolution" value="6.30 A"/>
    <property type="chains" value="A/B/C=36-545"/>
</dbReference>
<dbReference type="PDB" id="7TKC">
    <property type="method" value="EM"/>
    <property type="resolution" value="5.80 A"/>
    <property type="chains" value="A/B/C=36-545"/>
</dbReference>
<dbReference type="PDB" id="7TKD">
    <property type="method" value="EM"/>
    <property type="resolution" value="7.70 A"/>
    <property type="chains" value="A/B/C=36-545"/>
</dbReference>
<dbReference type="PDB" id="7TKE">
    <property type="method" value="EM"/>
    <property type="resolution" value="7.10 A"/>
    <property type="chains" value="A/B/C=36-545"/>
</dbReference>
<dbReference type="PDB" id="7TKF">
    <property type="method" value="EM"/>
    <property type="resolution" value="7.10 A"/>
    <property type="chains" value="A/B/C=36-545"/>
</dbReference>
<dbReference type="PDB" id="7TKG">
    <property type="method" value="EM"/>
    <property type="resolution" value="4.50 A"/>
    <property type="chains" value="A/B/C=36-545"/>
</dbReference>
<dbReference type="PDB" id="7TKH">
    <property type="method" value="EM"/>
    <property type="resolution" value="4.40 A"/>
    <property type="chains" value="A/B/C=36-545"/>
</dbReference>
<dbReference type="PDB" id="7TKI">
    <property type="method" value="EM"/>
    <property type="resolution" value="7.10 A"/>
    <property type="chains" value="A/B/C=36-545"/>
</dbReference>
<dbReference type="PDB" id="7TKJ">
    <property type="method" value="EM"/>
    <property type="resolution" value="7.50 A"/>
    <property type="chains" value="A/B/C=36-545"/>
</dbReference>
<dbReference type="PDB" id="7TKK">
    <property type="method" value="EM"/>
    <property type="resolution" value="7.30 A"/>
    <property type="chains" value="A/B/C=36-545"/>
</dbReference>
<dbReference type="PDB" id="7TKL">
    <property type="method" value="EM"/>
    <property type="resolution" value="6.40 A"/>
    <property type="chains" value="A/B/C=36-545"/>
</dbReference>
<dbReference type="PDB" id="7TKM">
    <property type="method" value="EM"/>
    <property type="resolution" value="4.50 A"/>
    <property type="chains" value="A/B/C=36-545"/>
</dbReference>
<dbReference type="PDB" id="7TKN">
    <property type="method" value="EM"/>
    <property type="resolution" value="7.10 A"/>
    <property type="chains" value="A/B/C=36-545"/>
</dbReference>
<dbReference type="PDB" id="7TKO">
    <property type="method" value="EM"/>
    <property type="resolution" value="4.80 A"/>
    <property type="chains" value="A/B/C=36-545"/>
</dbReference>
<dbReference type="PDB" id="7TKP">
    <property type="method" value="EM"/>
    <property type="resolution" value="4.60 A"/>
    <property type="chains" value="A/B/C=36-545"/>
</dbReference>
<dbReference type="PDB" id="7TKQ">
    <property type="method" value="EM"/>
    <property type="resolution" value="4.50 A"/>
    <property type="chains" value="A/B/C=36-545"/>
</dbReference>
<dbReference type="PDB" id="7TKR">
    <property type="method" value="EM"/>
    <property type="resolution" value="6.50 A"/>
    <property type="chains" value="A/B/C=36-545"/>
</dbReference>
<dbReference type="PDB" id="7TKS">
    <property type="method" value="EM"/>
    <property type="resolution" value="7.50 A"/>
    <property type="chains" value="A/B/C=36-545"/>
</dbReference>
<dbReference type="PDB" id="8F29">
    <property type="method" value="EM"/>
    <property type="resolution" value="4.00 A"/>
    <property type="chains" value="A/B/C=39-545"/>
</dbReference>
<dbReference type="PDB" id="8F2K">
    <property type="method" value="EM"/>
    <property type="resolution" value="2.90 A"/>
    <property type="chains" value="A/B/C=61-545"/>
</dbReference>
<dbReference type="PDB" id="8F39">
    <property type="method" value="EM"/>
    <property type="resolution" value="3.50 A"/>
    <property type="chains" value="A/B/C=39-545"/>
</dbReference>
<dbReference type="PDB" id="8FKJ">
    <property type="method" value="EM"/>
    <property type="resolution" value="4.20 A"/>
    <property type="chains" value="A/B/C=39-545"/>
</dbReference>
<dbReference type="PDB" id="8FL8">
    <property type="method" value="EM"/>
    <property type="resolution" value="4.20 A"/>
    <property type="chains" value="A/B/C=39-545"/>
</dbReference>
<dbReference type="PDBsum" id="2HLD"/>
<dbReference type="PDBsum" id="2WPD"/>
<dbReference type="PDBsum" id="2XOK"/>
<dbReference type="PDBsum" id="3FKS"/>
<dbReference type="PDBsum" id="3OE7"/>
<dbReference type="PDBsum" id="3OEE"/>
<dbReference type="PDBsum" id="3OEH"/>
<dbReference type="PDBsum" id="3OFN"/>
<dbReference type="PDBsum" id="3ZIA"/>
<dbReference type="PDBsum" id="3ZRY"/>
<dbReference type="PDBsum" id="4B2Q"/>
<dbReference type="PDBsum" id="6B8H"/>
<dbReference type="PDBsum" id="6CP3"/>
<dbReference type="PDBsum" id="6CP6"/>
<dbReference type="PDBsum" id="7TJT"/>
<dbReference type="PDBsum" id="7TJU"/>
<dbReference type="PDBsum" id="7TJV"/>
<dbReference type="PDBsum" id="7TJW"/>
<dbReference type="PDBsum" id="7TJX"/>
<dbReference type="PDBsum" id="7TJY"/>
<dbReference type="PDBsum" id="7TJZ"/>
<dbReference type="PDBsum" id="7TK0"/>
<dbReference type="PDBsum" id="7TK1"/>
<dbReference type="PDBsum" id="7TK2"/>
<dbReference type="PDBsum" id="7TK3"/>
<dbReference type="PDBsum" id="7TK4"/>
<dbReference type="PDBsum" id="7TK5"/>
<dbReference type="PDBsum" id="7TK6"/>
<dbReference type="PDBsum" id="7TK7"/>
<dbReference type="PDBsum" id="7TK8"/>
<dbReference type="PDBsum" id="7TK9"/>
<dbReference type="PDBsum" id="7TKA"/>
<dbReference type="PDBsum" id="7TKB"/>
<dbReference type="PDBsum" id="7TKC"/>
<dbReference type="PDBsum" id="7TKD"/>
<dbReference type="PDBsum" id="7TKE"/>
<dbReference type="PDBsum" id="7TKF"/>
<dbReference type="PDBsum" id="7TKG"/>
<dbReference type="PDBsum" id="7TKH"/>
<dbReference type="PDBsum" id="7TKI"/>
<dbReference type="PDBsum" id="7TKJ"/>
<dbReference type="PDBsum" id="7TKK"/>
<dbReference type="PDBsum" id="7TKL"/>
<dbReference type="PDBsum" id="7TKM"/>
<dbReference type="PDBsum" id="7TKN"/>
<dbReference type="PDBsum" id="7TKO"/>
<dbReference type="PDBsum" id="7TKP"/>
<dbReference type="PDBsum" id="7TKQ"/>
<dbReference type="PDBsum" id="7TKR"/>
<dbReference type="PDBsum" id="7TKS"/>
<dbReference type="PDBsum" id="8F29"/>
<dbReference type="PDBsum" id="8F2K"/>
<dbReference type="PDBsum" id="8F39"/>
<dbReference type="PDBsum" id="8FKJ"/>
<dbReference type="PDBsum" id="8FL8"/>
<dbReference type="EMDB" id="EMD-25931"/>
<dbReference type="EMDB" id="EMD-25932"/>
<dbReference type="EMDB" id="EMD-25933"/>
<dbReference type="EMDB" id="EMD-25934"/>
<dbReference type="EMDB" id="EMD-25939"/>
<dbReference type="EMDB" id="EMD-25946"/>
<dbReference type="EMDB" id="EMD-25947"/>
<dbReference type="EMDB" id="EMD-25948"/>
<dbReference type="EMDB" id="EMD-25949"/>
<dbReference type="EMDB" id="EMD-25954"/>
<dbReference type="EMDB" id="EMD-25955"/>
<dbReference type="EMDB" id="EMD-25956"/>
<dbReference type="EMDB" id="EMD-25957"/>
<dbReference type="EMDB" id="EMD-25958"/>
<dbReference type="EMDB" id="EMD-25959"/>
<dbReference type="EMDB" id="EMD-25960"/>
<dbReference type="EMDB" id="EMD-25961"/>
<dbReference type="EMDB" id="EMD-25962"/>
<dbReference type="EMDB" id="EMD-25963"/>
<dbReference type="EMDB" id="EMD-25964"/>
<dbReference type="EMDB" id="EMD-25965"/>
<dbReference type="EMDB" id="EMD-25966"/>
<dbReference type="EMDB" id="EMD-25967"/>
<dbReference type="EMDB" id="EMD-25968"/>
<dbReference type="EMDB" id="EMD-25969"/>
<dbReference type="EMDB" id="EMD-25970"/>
<dbReference type="EMDB" id="EMD-25971"/>
<dbReference type="EMDB" id="EMD-25972"/>
<dbReference type="EMDB" id="EMD-25973"/>
<dbReference type="EMDB" id="EMD-25974"/>
<dbReference type="EMDB" id="EMD-25975"/>
<dbReference type="EMDB" id="EMD-25976"/>
<dbReference type="EMDB" id="EMD-25977"/>
<dbReference type="EMDB" id="EMD-25978"/>
<dbReference type="EMDB" id="EMD-25979"/>
<dbReference type="EMDB" id="EMD-25980"/>
<dbReference type="EMDB" id="EMD-28809"/>
<dbReference type="EMDB" id="EMD-28835"/>
<dbReference type="EMDB" id="EMD-7546"/>
<dbReference type="EMDB" id="EMD-7548"/>
<dbReference type="SMR" id="P07251"/>
<dbReference type="BioGRID" id="32606">
    <property type="interactions" value="259"/>
</dbReference>
<dbReference type="ComplexPortal" id="CPX-3281">
    <property type="entry name" value="Mitochondrial proton-transporting ATP synthase complex"/>
</dbReference>
<dbReference type="DIP" id="DIP-3025N"/>
<dbReference type="FunCoup" id="P07251">
    <property type="interactions" value="1380"/>
</dbReference>
<dbReference type="IntAct" id="P07251">
    <property type="interactions" value="141"/>
</dbReference>
<dbReference type="MINT" id="P07251"/>
<dbReference type="STRING" id="4932.YBL099W"/>
<dbReference type="TCDB" id="3.A.2.1.3">
    <property type="family name" value="the h+- or na+-translocating f-type, v-type and a-type atpase (f-atpase) superfamily"/>
</dbReference>
<dbReference type="iPTMnet" id="P07251"/>
<dbReference type="PaxDb" id="4932-YBL099W"/>
<dbReference type="PeptideAtlas" id="P07251"/>
<dbReference type="EnsemblFungi" id="YBL099W_mRNA">
    <property type="protein sequence ID" value="YBL099W"/>
    <property type="gene ID" value="YBL099W"/>
</dbReference>
<dbReference type="GeneID" id="852177"/>
<dbReference type="KEGG" id="sce:YBL099W"/>
<dbReference type="AGR" id="SGD:S000000195"/>
<dbReference type="SGD" id="S000000195">
    <property type="gene designation" value="ATP1"/>
</dbReference>
<dbReference type="VEuPathDB" id="FungiDB:YBL099W"/>
<dbReference type="eggNOG" id="KOG1353">
    <property type="taxonomic scope" value="Eukaryota"/>
</dbReference>
<dbReference type="GeneTree" id="ENSGT00550000074846"/>
<dbReference type="HOGENOM" id="CLU_010091_2_1_1"/>
<dbReference type="InParanoid" id="P07251"/>
<dbReference type="OMA" id="INQRDNW"/>
<dbReference type="OrthoDB" id="9805536at2759"/>
<dbReference type="BioCyc" id="YEAST:G3O-28984-MONOMER"/>
<dbReference type="BRENDA" id="7.1.2.2">
    <property type="organism ID" value="984"/>
</dbReference>
<dbReference type="Reactome" id="R-SCE-9837999">
    <property type="pathway name" value="Mitochondrial protein degradation"/>
</dbReference>
<dbReference type="BioGRID-ORCS" id="852177">
    <property type="hits" value="5 hits in 10 CRISPR screens"/>
</dbReference>
<dbReference type="EvolutionaryTrace" id="P07251"/>
<dbReference type="PRO" id="PR:P07251"/>
<dbReference type="Proteomes" id="UP000002311">
    <property type="component" value="Chromosome II"/>
</dbReference>
<dbReference type="RNAct" id="P07251">
    <property type="molecule type" value="protein"/>
</dbReference>
<dbReference type="GO" id="GO:0005829">
    <property type="term" value="C:cytosol"/>
    <property type="evidence" value="ECO:0000304"/>
    <property type="project" value="Reactome"/>
</dbReference>
<dbReference type="GO" id="GO:0005743">
    <property type="term" value="C:mitochondrial inner membrane"/>
    <property type="evidence" value="ECO:0000314"/>
    <property type="project" value="ComplexPortal"/>
</dbReference>
<dbReference type="GO" id="GO:0005758">
    <property type="term" value="C:mitochondrial intermembrane space"/>
    <property type="evidence" value="ECO:0000304"/>
    <property type="project" value="Reactome"/>
</dbReference>
<dbReference type="GO" id="GO:0042645">
    <property type="term" value="C:mitochondrial nucleoid"/>
    <property type="evidence" value="ECO:0000314"/>
    <property type="project" value="SGD"/>
</dbReference>
<dbReference type="GO" id="GO:0005739">
    <property type="term" value="C:mitochondrion"/>
    <property type="evidence" value="ECO:0000314"/>
    <property type="project" value="SGD"/>
</dbReference>
<dbReference type="GO" id="GO:0045259">
    <property type="term" value="C:proton-transporting ATP synthase complex"/>
    <property type="evidence" value="ECO:0000314"/>
    <property type="project" value="SGD"/>
</dbReference>
<dbReference type="GO" id="GO:0043531">
    <property type="term" value="F:ADP binding"/>
    <property type="evidence" value="ECO:0000318"/>
    <property type="project" value="GO_Central"/>
</dbReference>
<dbReference type="GO" id="GO:0005524">
    <property type="term" value="F:ATP binding"/>
    <property type="evidence" value="ECO:0000318"/>
    <property type="project" value="GO_Central"/>
</dbReference>
<dbReference type="GO" id="GO:0046933">
    <property type="term" value="F:proton-transporting ATP synthase activity, rotational mechanism"/>
    <property type="evidence" value="ECO:0007669"/>
    <property type="project" value="InterPro"/>
</dbReference>
<dbReference type="GO" id="GO:0015986">
    <property type="term" value="P:proton motive force-driven ATP synthesis"/>
    <property type="evidence" value="ECO:0000314"/>
    <property type="project" value="ComplexPortal"/>
</dbReference>
<dbReference type="CDD" id="cd18113">
    <property type="entry name" value="ATP-synt_F1_alpha_C"/>
    <property type="match status" value="1"/>
</dbReference>
<dbReference type="CDD" id="cd18116">
    <property type="entry name" value="ATP-synt_F1_alpha_N"/>
    <property type="match status" value="1"/>
</dbReference>
<dbReference type="CDD" id="cd01132">
    <property type="entry name" value="F1-ATPase_alpha_CD"/>
    <property type="match status" value="1"/>
</dbReference>
<dbReference type="FunFam" id="1.20.150.20:FF:000001">
    <property type="entry name" value="ATP synthase subunit alpha"/>
    <property type="match status" value="1"/>
</dbReference>
<dbReference type="FunFam" id="2.40.30.20:FF:000001">
    <property type="entry name" value="ATP synthase subunit alpha"/>
    <property type="match status" value="1"/>
</dbReference>
<dbReference type="FunFam" id="3.40.50.300:FF:004039">
    <property type="entry name" value="ATP synthase subunit alpha, mitochondrial"/>
    <property type="match status" value="1"/>
</dbReference>
<dbReference type="Gene3D" id="2.40.30.20">
    <property type="match status" value="1"/>
</dbReference>
<dbReference type="Gene3D" id="1.20.150.20">
    <property type="entry name" value="ATP synthase alpha/beta chain, C-terminal domain"/>
    <property type="match status" value="1"/>
</dbReference>
<dbReference type="Gene3D" id="3.40.50.300">
    <property type="entry name" value="P-loop containing nucleotide triphosphate hydrolases"/>
    <property type="match status" value="1"/>
</dbReference>
<dbReference type="HAMAP" id="MF_01346">
    <property type="entry name" value="ATP_synth_alpha_bact"/>
    <property type="match status" value="1"/>
</dbReference>
<dbReference type="InterPro" id="IPR023366">
    <property type="entry name" value="ATP_synth_asu-like_sf"/>
</dbReference>
<dbReference type="InterPro" id="IPR000793">
    <property type="entry name" value="ATP_synth_asu_C"/>
</dbReference>
<dbReference type="InterPro" id="IPR038376">
    <property type="entry name" value="ATP_synth_asu_C_sf"/>
</dbReference>
<dbReference type="InterPro" id="IPR033732">
    <property type="entry name" value="ATP_synth_F1_a_nt-bd_dom"/>
</dbReference>
<dbReference type="InterPro" id="IPR005294">
    <property type="entry name" value="ATP_synth_F1_asu"/>
</dbReference>
<dbReference type="InterPro" id="IPR020003">
    <property type="entry name" value="ATPase_a/bsu_AS"/>
</dbReference>
<dbReference type="InterPro" id="IPR004100">
    <property type="entry name" value="ATPase_F1/V1/A1_a/bsu_N"/>
</dbReference>
<dbReference type="InterPro" id="IPR036121">
    <property type="entry name" value="ATPase_F1/V1/A1_a/bsu_N_sf"/>
</dbReference>
<dbReference type="InterPro" id="IPR000194">
    <property type="entry name" value="ATPase_F1/V1/A1_a/bsu_nucl-bd"/>
</dbReference>
<dbReference type="InterPro" id="IPR027417">
    <property type="entry name" value="P-loop_NTPase"/>
</dbReference>
<dbReference type="NCBIfam" id="TIGR00962">
    <property type="entry name" value="atpA"/>
    <property type="match status" value="1"/>
</dbReference>
<dbReference type="NCBIfam" id="NF009884">
    <property type="entry name" value="PRK13343.1"/>
    <property type="match status" value="1"/>
</dbReference>
<dbReference type="PANTHER" id="PTHR48082">
    <property type="entry name" value="ATP SYNTHASE SUBUNIT ALPHA, MITOCHONDRIAL"/>
    <property type="match status" value="1"/>
</dbReference>
<dbReference type="PANTHER" id="PTHR48082:SF2">
    <property type="entry name" value="ATP SYNTHASE SUBUNIT ALPHA, MITOCHONDRIAL"/>
    <property type="match status" value="1"/>
</dbReference>
<dbReference type="Pfam" id="PF00006">
    <property type="entry name" value="ATP-synt_ab"/>
    <property type="match status" value="1"/>
</dbReference>
<dbReference type="Pfam" id="PF00306">
    <property type="entry name" value="ATP-synt_ab_C"/>
    <property type="match status" value="1"/>
</dbReference>
<dbReference type="Pfam" id="PF02874">
    <property type="entry name" value="ATP-synt_ab_N"/>
    <property type="match status" value="1"/>
</dbReference>
<dbReference type="PIRSF" id="PIRSF039088">
    <property type="entry name" value="F_ATPase_subunit_alpha"/>
    <property type="match status" value="1"/>
</dbReference>
<dbReference type="SUPFAM" id="SSF47917">
    <property type="entry name" value="C-terminal domain of alpha and beta subunits of F1 ATP synthase"/>
    <property type="match status" value="1"/>
</dbReference>
<dbReference type="SUPFAM" id="SSF50615">
    <property type="entry name" value="N-terminal domain of alpha and beta subunits of F1 ATP synthase"/>
    <property type="match status" value="1"/>
</dbReference>
<dbReference type="SUPFAM" id="SSF52540">
    <property type="entry name" value="P-loop containing nucleoside triphosphate hydrolases"/>
    <property type="match status" value="1"/>
</dbReference>
<dbReference type="PROSITE" id="PS00152">
    <property type="entry name" value="ATPASE_ALPHA_BETA"/>
    <property type="match status" value="1"/>
</dbReference>
<accession>P07251</accession>
<accession>D6VPQ6</accession>
<accession>Q92449</accession>
<organism>
    <name type="scientific">Saccharomyces cerevisiae (strain ATCC 204508 / S288c)</name>
    <name type="common">Baker's yeast</name>
    <dbReference type="NCBI Taxonomy" id="559292"/>
    <lineage>
        <taxon>Eukaryota</taxon>
        <taxon>Fungi</taxon>
        <taxon>Dikarya</taxon>
        <taxon>Ascomycota</taxon>
        <taxon>Saccharomycotina</taxon>
        <taxon>Saccharomycetes</taxon>
        <taxon>Saccharomycetales</taxon>
        <taxon>Saccharomycetaceae</taxon>
        <taxon>Saccharomyces</taxon>
    </lineage>
</organism>